<keyword id="KW-0047">Antifreeze protein</keyword>
<keyword id="KW-0903">Direct protein sequencing</keyword>
<keyword id="KW-0677">Repeat</keyword>
<dbReference type="PIR" id="S07046">
    <property type="entry name" value="FDFI8G"/>
</dbReference>
<dbReference type="SMR" id="P20617"/>
<reference key="1">
    <citation type="journal article" date="1988" name="Can. J. Zool.">
        <title>Primary structures of the alanine-rich antifreeze polypeptides from grubby sculpin, Myoxocephalus aenaeus.</title>
        <authorList>
            <person name="Chakrabartty A."/>
            <person name="Hew C.-L."/>
            <person name="Shears M."/>
            <person name="Fletcher G."/>
        </authorList>
    </citation>
    <scope>PROTEIN SEQUENCE</scope>
</reference>
<sequence>MDGETPAQKAARLAAAAAALAAKTAADAAAKAAAIAAAAA</sequence>
<accession>P20617</accession>
<name>ANP8_MYOAE</name>
<feature type="chain" id="PRO_0000155147" description="Ice-structuring protein GS-8">
    <location>
        <begin position="1"/>
        <end position="40"/>
    </location>
</feature>
<feature type="modified residue" description="Blocked amino end (Met)">
    <location>
        <position position="1"/>
    </location>
</feature>
<protein>
    <recommendedName>
        <fullName>Ice-structuring protein GS-8</fullName>
        <shortName>ISP GS-8</shortName>
    </recommendedName>
    <alternativeName>
        <fullName>Antifreeze peptide GS-8</fullName>
    </alternativeName>
</protein>
<organism>
    <name type="scientific">Myoxocephalus aenaeus</name>
    <name type="common">Grubby sculpin</name>
    <name type="synonym">Cottus aenaeus</name>
    <dbReference type="NCBI Taxonomy" id="8096"/>
    <lineage>
        <taxon>Eukaryota</taxon>
        <taxon>Metazoa</taxon>
        <taxon>Chordata</taxon>
        <taxon>Craniata</taxon>
        <taxon>Vertebrata</taxon>
        <taxon>Euteleostomi</taxon>
        <taxon>Actinopterygii</taxon>
        <taxon>Neopterygii</taxon>
        <taxon>Teleostei</taxon>
        <taxon>Neoteleostei</taxon>
        <taxon>Acanthomorphata</taxon>
        <taxon>Eupercaria</taxon>
        <taxon>Perciformes</taxon>
        <taxon>Cottioidei</taxon>
        <taxon>Cottales</taxon>
        <taxon>Cottidae</taxon>
        <taxon>Myoxocephalus</taxon>
    </lineage>
</organism>
<proteinExistence type="evidence at protein level"/>
<evidence type="ECO:0000305" key="1"/>
<comment type="function">
    <text>Antifreeze proteins lower the blood freezing point.</text>
</comment>
<comment type="similarity">
    <text evidence="1">Belongs to the type-I AFP family.</text>
</comment>